<organism>
    <name type="scientific">Tolumonas auensis (strain DSM 9187 / NBRC 110442 / TA 4)</name>
    <dbReference type="NCBI Taxonomy" id="595494"/>
    <lineage>
        <taxon>Bacteria</taxon>
        <taxon>Pseudomonadati</taxon>
        <taxon>Pseudomonadota</taxon>
        <taxon>Gammaproteobacteria</taxon>
        <taxon>Aeromonadales</taxon>
        <taxon>Aeromonadaceae</taxon>
        <taxon>Tolumonas</taxon>
    </lineage>
</organism>
<proteinExistence type="inferred from homology"/>
<name>Y828_TOLAT</name>
<evidence type="ECO:0000255" key="1">
    <source>
        <dbReference type="HAMAP-Rule" id="MF_01561"/>
    </source>
</evidence>
<dbReference type="EC" id="3.1.3.-" evidence="1"/>
<dbReference type="EMBL" id="CP001616">
    <property type="protein sequence ID" value="ACQ92456.1"/>
    <property type="molecule type" value="Genomic_DNA"/>
</dbReference>
<dbReference type="RefSeq" id="WP_012729055.1">
    <property type="nucleotide sequence ID" value="NC_012691.1"/>
</dbReference>
<dbReference type="SMR" id="C4LBX7"/>
<dbReference type="STRING" id="595494.Tola_0828"/>
<dbReference type="KEGG" id="tau:Tola_0828"/>
<dbReference type="eggNOG" id="COG1387">
    <property type="taxonomic scope" value="Bacteria"/>
</dbReference>
<dbReference type="HOGENOM" id="CLU_061999_0_1_6"/>
<dbReference type="OrthoDB" id="9808747at2"/>
<dbReference type="Proteomes" id="UP000009073">
    <property type="component" value="Chromosome"/>
</dbReference>
<dbReference type="GO" id="GO:0005829">
    <property type="term" value="C:cytosol"/>
    <property type="evidence" value="ECO:0007669"/>
    <property type="project" value="TreeGrafter"/>
</dbReference>
<dbReference type="GO" id="GO:0016791">
    <property type="term" value="F:phosphatase activity"/>
    <property type="evidence" value="ECO:0007669"/>
    <property type="project" value="UniProtKB-UniRule"/>
</dbReference>
<dbReference type="GO" id="GO:0008270">
    <property type="term" value="F:zinc ion binding"/>
    <property type="evidence" value="ECO:0007669"/>
    <property type="project" value="UniProtKB-UniRule"/>
</dbReference>
<dbReference type="GO" id="GO:0071978">
    <property type="term" value="P:bacterial-type flagellum-dependent swarming motility"/>
    <property type="evidence" value="ECO:0007669"/>
    <property type="project" value="TreeGrafter"/>
</dbReference>
<dbReference type="CDD" id="cd07437">
    <property type="entry name" value="PHP_HisPPase_Ycdx_like"/>
    <property type="match status" value="1"/>
</dbReference>
<dbReference type="FunFam" id="3.20.20.140:FF:000008">
    <property type="entry name" value="Probable phosphatase YcdX"/>
    <property type="match status" value="1"/>
</dbReference>
<dbReference type="Gene3D" id="3.20.20.140">
    <property type="entry name" value="Metal-dependent hydrolases"/>
    <property type="match status" value="1"/>
</dbReference>
<dbReference type="HAMAP" id="MF_01561">
    <property type="entry name" value="YcdX_phosphat"/>
    <property type="match status" value="1"/>
</dbReference>
<dbReference type="InterPro" id="IPR023710">
    <property type="entry name" value="Phosphatase_YcdX_put"/>
</dbReference>
<dbReference type="InterPro" id="IPR004013">
    <property type="entry name" value="PHP_dom"/>
</dbReference>
<dbReference type="InterPro" id="IPR050243">
    <property type="entry name" value="PHP_phosphatase"/>
</dbReference>
<dbReference type="InterPro" id="IPR003141">
    <property type="entry name" value="Pol/His_phosphatase_N"/>
</dbReference>
<dbReference type="InterPro" id="IPR016195">
    <property type="entry name" value="Pol/histidinol_Pase-like"/>
</dbReference>
<dbReference type="NCBIfam" id="NF006702">
    <property type="entry name" value="PRK09248.1"/>
    <property type="match status" value="1"/>
</dbReference>
<dbReference type="PANTHER" id="PTHR36928">
    <property type="entry name" value="PHOSPHATASE YCDX-RELATED"/>
    <property type="match status" value="1"/>
</dbReference>
<dbReference type="PANTHER" id="PTHR36928:SF1">
    <property type="entry name" value="PHOSPHATASE YCDX-RELATED"/>
    <property type="match status" value="1"/>
</dbReference>
<dbReference type="Pfam" id="PF02811">
    <property type="entry name" value="PHP"/>
    <property type="match status" value="1"/>
</dbReference>
<dbReference type="SMART" id="SM00481">
    <property type="entry name" value="POLIIIAc"/>
    <property type="match status" value="1"/>
</dbReference>
<dbReference type="SUPFAM" id="SSF89550">
    <property type="entry name" value="PHP domain-like"/>
    <property type="match status" value="1"/>
</dbReference>
<protein>
    <recommendedName>
        <fullName evidence="1">Probable phosphatase Tola_0828</fullName>
        <ecNumber evidence="1">3.1.3.-</ecNumber>
    </recommendedName>
</protein>
<reference key="1">
    <citation type="submission" date="2009-05" db="EMBL/GenBank/DDBJ databases">
        <title>Complete sequence of Tolumonas auensis DSM 9187.</title>
        <authorList>
            <consortium name="US DOE Joint Genome Institute"/>
            <person name="Lucas S."/>
            <person name="Copeland A."/>
            <person name="Lapidus A."/>
            <person name="Glavina del Rio T."/>
            <person name="Tice H."/>
            <person name="Bruce D."/>
            <person name="Goodwin L."/>
            <person name="Pitluck S."/>
            <person name="Chertkov O."/>
            <person name="Brettin T."/>
            <person name="Detter J.C."/>
            <person name="Han C."/>
            <person name="Larimer F."/>
            <person name="Land M."/>
            <person name="Hauser L."/>
            <person name="Kyrpides N."/>
            <person name="Mikhailova N."/>
            <person name="Spring S."/>
            <person name="Beller H."/>
        </authorList>
    </citation>
    <scope>NUCLEOTIDE SEQUENCE [LARGE SCALE GENOMIC DNA]</scope>
    <source>
        <strain>DSM 9187 / NBRC 110442 / TA 4</strain>
    </source>
</reference>
<sequence>MRYQVDTHTHTLASSHAYSTIHDYIAEAKRKGIVLFATTDHGPDMADAPHAWHFINSRVIPRMVDGVGILRGIEANIKDEFGEIDCNEKMLNELDIVLAGFHEQVFAPKDRDTNTRAMINAMKKGLVHVITHPGNPKFPVDIHAIAEAAAKYNVALEINNSSFLHSRVGSDVNCTAIAKAVRDAGGWVSMGSDSHIAYSLGDLEMSQAILDDVDFPADRVLNRSPRVLLDFLESRGKPHIPEFAGL</sequence>
<comment type="cofactor">
    <cofactor evidence="1">
        <name>Zn(2+)</name>
        <dbReference type="ChEBI" id="CHEBI:29105"/>
    </cofactor>
    <text evidence="1">Binds 3 Zn(2+) ions per subunit.</text>
</comment>
<comment type="similarity">
    <text evidence="1">Belongs to the PHP family.</text>
</comment>
<accession>C4LBX7</accession>
<keyword id="KW-0378">Hydrolase</keyword>
<keyword id="KW-0479">Metal-binding</keyword>
<keyword id="KW-1185">Reference proteome</keyword>
<keyword id="KW-0862">Zinc</keyword>
<feature type="chain" id="PRO_0000382659" description="Probable phosphatase Tola_0828">
    <location>
        <begin position="1"/>
        <end position="246"/>
    </location>
</feature>
<feature type="binding site" evidence="1">
    <location>
        <position position="8"/>
    </location>
    <ligand>
        <name>Zn(2+)</name>
        <dbReference type="ChEBI" id="CHEBI:29105"/>
        <label>1</label>
    </ligand>
</feature>
<feature type="binding site" evidence="1">
    <location>
        <position position="10"/>
    </location>
    <ligand>
        <name>Zn(2+)</name>
        <dbReference type="ChEBI" id="CHEBI:29105"/>
        <label>1</label>
    </ligand>
</feature>
<feature type="binding site" evidence="1">
    <location>
        <position position="16"/>
    </location>
    <ligand>
        <name>Zn(2+)</name>
        <dbReference type="ChEBI" id="CHEBI:29105"/>
        <label>2</label>
    </ligand>
</feature>
<feature type="binding site" evidence="1">
    <location>
        <position position="41"/>
    </location>
    <ligand>
        <name>Zn(2+)</name>
        <dbReference type="ChEBI" id="CHEBI:29105"/>
        <label>2</label>
    </ligand>
</feature>
<feature type="binding site" evidence="1">
    <location>
        <position position="74"/>
    </location>
    <ligand>
        <name>Zn(2+)</name>
        <dbReference type="ChEBI" id="CHEBI:29105"/>
        <label>1</label>
    </ligand>
</feature>
<feature type="binding site" evidence="1">
    <location>
        <position position="74"/>
    </location>
    <ligand>
        <name>Zn(2+)</name>
        <dbReference type="ChEBI" id="CHEBI:29105"/>
        <label>3</label>
    </ligand>
</feature>
<feature type="binding site" evidence="1">
    <location>
        <position position="102"/>
    </location>
    <ligand>
        <name>Zn(2+)</name>
        <dbReference type="ChEBI" id="CHEBI:29105"/>
        <label>3</label>
    </ligand>
</feature>
<feature type="binding site" evidence="1">
    <location>
        <position position="132"/>
    </location>
    <ligand>
        <name>Zn(2+)</name>
        <dbReference type="ChEBI" id="CHEBI:29105"/>
        <label>3</label>
    </ligand>
</feature>
<feature type="binding site" evidence="1">
    <location>
        <position position="193"/>
    </location>
    <ligand>
        <name>Zn(2+)</name>
        <dbReference type="ChEBI" id="CHEBI:29105"/>
        <label>1</label>
    </ligand>
</feature>
<feature type="binding site" evidence="1">
    <location>
        <position position="195"/>
    </location>
    <ligand>
        <name>Zn(2+)</name>
        <dbReference type="ChEBI" id="CHEBI:29105"/>
        <label>2</label>
    </ligand>
</feature>
<gene>
    <name type="ordered locus">Tola_0828</name>
</gene>